<proteinExistence type="inferred from homology"/>
<name>ERPA_XYLFM</name>
<gene>
    <name evidence="1" type="primary">erpA</name>
    <name type="ordered locus">Xfasm12_1830</name>
</gene>
<feature type="chain" id="PRO_1000144944" description="Iron-sulfur cluster insertion protein ErpA">
    <location>
        <begin position="1"/>
        <end position="128"/>
    </location>
</feature>
<feature type="binding site" evidence="1">
    <location>
        <position position="56"/>
    </location>
    <ligand>
        <name>iron-sulfur cluster</name>
        <dbReference type="ChEBI" id="CHEBI:30408"/>
    </ligand>
</feature>
<feature type="binding site" evidence="1">
    <location>
        <position position="120"/>
    </location>
    <ligand>
        <name>iron-sulfur cluster</name>
        <dbReference type="ChEBI" id="CHEBI:30408"/>
    </ligand>
</feature>
<feature type="binding site" evidence="1">
    <location>
        <position position="122"/>
    </location>
    <ligand>
        <name>iron-sulfur cluster</name>
        <dbReference type="ChEBI" id="CHEBI:30408"/>
    </ligand>
</feature>
<dbReference type="EMBL" id="CP000941">
    <property type="protein sequence ID" value="ACA12718.1"/>
    <property type="molecule type" value="Genomic_DNA"/>
</dbReference>
<dbReference type="RefSeq" id="WP_004083617.1">
    <property type="nucleotide sequence ID" value="NC_010513.1"/>
</dbReference>
<dbReference type="SMR" id="B0U4D9"/>
<dbReference type="KEGG" id="xfm:Xfasm12_1830"/>
<dbReference type="HOGENOM" id="CLU_069054_5_3_6"/>
<dbReference type="GO" id="GO:0005829">
    <property type="term" value="C:cytosol"/>
    <property type="evidence" value="ECO:0007669"/>
    <property type="project" value="TreeGrafter"/>
</dbReference>
<dbReference type="GO" id="GO:0051537">
    <property type="term" value="F:2 iron, 2 sulfur cluster binding"/>
    <property type="evidence" value="ECO:0007669"/>
    <property type="project" value="TreeGrafter"/>
</dbReference>
<dbReference type="GO" id="GO:0051539">
    <property type="term" value="F:4 iron, 4 sulfur cluster binding"/>
    <property type="evidence" value="ECO:0007669"/>
    <property type="project" value="TreeGrafter"/>
</dbReference>
<dbReference type="GO" id="GO:0005506">
    <property type="term" value="F:iron ion binding"/>
    <property type="evidence" value="ECO:0007669"/>
    <property type="project" value="UniProtKB-UniRule"/>
</dbReference>
<dbReference type="GO" id="GO:0016226">
    <property type="term" value="P:iron-sulfur cluster assembly"/>
    <property type="evidence" value="ECO:0007669"/>
    <property type="project" value="UniProtKB-UniRule"/>
</dbReference>
<dbReference type="FunFam" id="2.60.300.12:FF:000002">
    <property type="entry name" value="Iron-sulfur cluster insertion protein ErpA"/>
    <property type="match status" value="1"/>
</dbReference>
<dbReference type="Gene3D" id="2.60.300.12">
    <property type="entry name" value="HesB-like domain"/>
    <property type="match status" value="1"/>
</dbReference>
<dbReference type="HAMAP" id="MF_01380">
    <property type="entry name" value="Fe_S_insert_ErpA"/>
    <property type="match status" value="1"/>
</dbReference>
<dbReference type="InterPro" id="IPR000361">
    <property type="entry name" value="FeS_biogenesis"/>
</dbReference>
<dbReference type="InterPro" id="IPR016092">
    <property type="entry name" value="FeS_cluster_insertion"/>
</dbReference>
<dbReference type="InterPro" id="IPR017870">
    <property type="entry name" value="FeS_cluster_insertion_CS"/>
</dbReference>
<dbReference type="InterPro" id="IPR023063">
    <property type="entry name" value="FeS_cluster_insertion_RrpA"/>
</dbReference>
<dbReference type="InterPro" id="IPR035903">
    <property type="entry name" value="HesB-like_dom_sf"/>
</dbReference>
<dbReference type="NCBIfam" id="TIGR00049">
    <property type="entry name" value="iron-sulfur cluster assembly accessory protein"/>
    <property type="match status" value="1"/>
</dbReference>
<dbReference type="NCBIfam" id="NF010147">
    <property type="entry name" value="PRK13623.1"/>
    <property type="match status" value="1"/>
</dbReference>
<dbReference type="PANTHER" id="PTHR43011">
    <property type="entry name" value="IRON-SULFUR CLUSTER ASSEMBLY 2 HOMOLOG, MITOCHONDRIAL"/>
    <property type="match status" value="1"/>
</dbReference>
<dbReference type="PANTHER" id="PTHR43011:SF1">
    <property type="entry name" value="IRON-SULFUR CLUSTER ASSEMBLY 2 HOMOLOG, MITOCHONDRIAL"/>
    <property type="match status" value="1"/>
</dbReference>
<dbReference type="Pfam" id="PF01521">
    <property type="entry name" value="Fe-S_biosyn"/>
    <property type="match status" value="1"/>
</dbReference>
<dbReference type="SUPFAM" id="SSF89360">
    <property type="entry name" value="HesB-like domain"/>
    <property type="match status" value="1"/>
</dbReference>
<dbReference type="PROSITE" id="PS01152">
    <property type="entry name" value="HESB"/>
    <property type="match status" value="1"/>
</dbReference>
<accession>B0U4D9</accession>
<comment type="function">
    <text evidence="1">Required for insertion of 4Fe-4S clusters for at least IspG.</text>
</comment>
<comment type="cofactor">
    <cofactor evidence="1">
        <name>iron-sulfur cluster</name>
        <dbReference type="ChEBI" id="CHEBI:30408"/>
    </cofactor>
    <text evidence="1">Binds 1 iron-sulfur cluster per subunit.</text>
</comment>
<comment type="subunit">
    <text evidence="1">Homodimer.</text>
</comment>
<comment type="similarity">
    <text evidence="1">Belongs to the HesB/IscA family.</text>
</comment>
<organism>
    <name type="scientific">Xylella fastidiosa (strain M12)</name>
    <dbReference type="NCBI Taxonomy" id="405440"/>
    <lineage>
        <taxon>Bacteria</taxon>
        <taxon>Pseudomonadati</taxon>
        <taxon>Pseudomonadota</taxon>
        <taxon>Gammaproteobacteria</taxon>
        <taxon>Lysobacterales</taxon>
        <taxon>Lysobacteraceae</taxon>
        <taxon>Xylella</taxon>
    </lineage>
</organism>
<keyword id="KW-0408">Iron</keyword>
<keyword id="KW-0411">Iron-sulfur</keyword>
<keyword id="KW-0479">Metal-binding</keyword>
<sequence>MTMLISLPTAPSVPNYQSLERPLNFTMAAAAKVRELIQEENSADLALRVYIQGGGCSGFQYGFEFDENRADDDLVLETDGVVLLVDPLSLQYLLGAEVDYTESLTGAKFVIRNPNAKTTCGCGSSFSI</sequence>
<evidence type="ECO:0000255" key="1">
    <source>
        <dbReference type="HAMAP-Rule" id="MF_01380"/>
    </source>
</evidence>
<protein>
    <recommendedName>
        <fullName evidence="1">Iron-sulfur cluster insertion protein ErpA</fullName>
    </recommendedName>
</protein>
<reference key="1">
    <citation type="journal article" date="2010" name="J. Bacteriol.">
        <title>Whole genome sequences of two Xylella fastidiosa strains (M12 and M23) causing almond leaf scorch disease in California.</title>
        <authorList>
            <person name="Chen J."/>
            <person name="Xie G."/>
            <person name="Han S."/>
            <person name="Chertkov O."/>
            <person name="Sims D."/>
            <person name="Civerolo E.L."/>
        </authorList>
    </citation>
    <scope>NUCLEOTIDE SEQUENCE [LARGE SCALE GENOMIC DNA]</scope>
    <source>
        <strain>M12</strain>
    </source>
</reference>